<accession>Q6NF74</accession>
<keyword id="KW-0067">ATP-binding</keyword>
<keyword id="KW-0143">Chaperone</keyword>
<keyword id="KW-0963">Cytoplasm</keyword>
<keyword id="KW-0413">Isomerase</keyword>
<keyword id="KW-0547">Nucleotide-binding</keyword>
<keyword id="KW-1185">Reference proteome</keyword>
<organism>
    <name type="scientific">Corynebacterium diphtheriae (strain ATCC 700971 / NCTC 13129 / Biotype gravis)</name>
    <dbReference type="NCBI Taxonomy" id="257309"/>
    <lineage>
        <taxon>Bacteria</taxon>
        <taxon>Bacillati</taxon>
        <taxon>Actinomycetota</taxon>
        <taxon>Actinomycetes</taxon>
        <taxon>Mycobacteriales</taxon>
        <taxon>Corynebacteriaceae</taxon>
        <taxon>Corynebacterium</taxon>
    </lineage>
</organism>
<comment type="function">
    <text evidence="1">Together with its co-chaperonin GroES, plays an essential role in assisting protein folding. The GroEL-GroES system forms a nano-cage that allows encapsulation of the non-native substrate proteins and provides a physical environment optimized to promote and accelerate protein folding.</text>
</comment>
<comment type="catalytic activity">
    <reaction evidence="1">
        <text>ATP + H2O + a folded polypeptide = ADP + phosphate + an unfolded polypeptide.</text>
        <dbReference type="EC" id="5.6.1.7"/>
    </reaction>
</comment>
<comment type="subunit">
    <text evidence="1">Forms a cylinder of 14 subunits composed of two heptameric rings stacked back-to-back. Interacts with the co-chaperonin GroES.</text>
</comment>
<comment type="subcellular location">
    <subcellularLocation>
        <location evidence="1">Cytoplasm</location>
    </subcellularLocation>
</comment>
<comment type="similarity">
    <text evidence="1">Belongs to the chaperonin (HSP60) family.</text>
</comment>
<sequence>MAKIIAFDEEARRGLEKGLNTLADAVKVTLGPKGRNVVLEKSWGAPTITNDGVSIAREIELEDPYEKIGAELVKEVAKKTDDVAGDGTTTATVLAQALVREGLRNVAAGSNPMGIKRGIELATAKVTEALLASAKEVETEEQIAATAGISAADPAIGEQIAKAMYAVGGGKLNKESVITVEESNTFGVDLEVTEGMRFDKGYISGYFATDMERLEAVLEDPYILLVSGKISNIKELLPLLEKVMQTGKPLLIIAEDVEGEALSTLVVNKIRGTFKSVAVKAPGFGDRRKAQLQDMAILTGSQVISEEVGLSLETADLPLLGRARKVVVTKDDTTIVEGAGDSAQIDGRVNQIRTEIENSDSEYDREKLQERLAKLSGGVAVIKVGAATEVELTERKHRIEDAVRNAKAAVEEGIVAGGGVALLQAAHVLANDLDLTGDEATGVKIVREALSAPLKQIALNAGLEAGVVADKVSHLPAGEGLNAATGEYVDLMAAGINDPVKVTRSALQNAASIAALFLTTEAVVADKPEPAAPAMPGADEMGGMGF</sequence>
<evidence type="ECO:0000255" key="1">
    <source>
        <dbReference type="HAMAP-Rule" id="MF_00600"/>
    </source>
</evidence>
<gene>
    <name evidence="1" type="primary">groEL2</name>
    <name evidence="1" type="synonym">groL2</name>
    <name type="ordered locus">DIP2020</name>
</gene>
<proteinExistence type="inferred from homology"/>
<protein>
    <recommendedName>
        <fullName evidence="1">Chaperonin GroEL 2</fullName>
        <ecNumber evidence="1">5.6.1.7</ecNumber>
    </recommendedName>
    <alternativeName>
        <fullName evidence="1">60 kDa chaperonin 2</fullName>
    </alternativeName>
    <alternativeName>
        <fullName evidence="1">Chaperonin-60 2</fullName>
        <shortName evidence="1">Cpn60 2</shortName>
    </alternativeName>
</protein>
<reference key="1">
    <citation type="journal article" date="2003" name="Nucleic Acids Res.">
        <title>The complete genome sequence and analysis of Corynebacterium diphtheriae NCTC13129.</title>
        <authorList>
            <person name="Cerdeno-Tarraga A.-M."/>
            <person name="Efstratiou A."/>
            <person name="Dover L.G."/>
            <person name="Holden M.T.G."/>
            <person name="Pallen M.J."/>
            <person name="Bentley S.D."/>
            <person name="Besra G.S."/>
            <person name="Churcher C.M."/>
            <person name="James K.D."/>
            <person name="De Zoysa A."/>
            <person name="Chillingworth T."/>
            <person name="Cronin A."/>
            <person name="Dowd L."/>
            <person name="Feltwell T."/>
            <person name="Hamlin N."/>
            <person name="Holroyd S."/>
            <person name="Jagels K."/>
            <person name="Moule S."/>
            <person name="Quail M.A."/>
            <person name="Rabbinowitsch E."/>
            <person name="Rutherford K.M."/>
            <person name="Thomson N.R."/>
            <person name="Unwin L."/>
            <person name="Whitehead S."/>
            <person name="Barrell B.G."/>
            <person name="Parkhill J."/>
        </authorList>
    </citation>
    <scope>NUCLEOTIDE SEQUENCE [LARGE SCALE GENOMIC DNA]</scope>
    <source>
        <strain>ATCC 700971 / NCTC 13129 / Biotype gravis</strain>
    </source>
</reference>
<dbReference type="EC" id="5.6.1.7" evidence="1"/>
<dbReference type="EMBL" id="BX248359">
    <property type="protein sequence ID" value="CAE50551.1"/>
    <property type="molecule type" value="Genomic_DNA"/>
</dbReference>
<dbReference type="SMR" id="Q6NF74"/>
<dbReference type="STRING" id="257309.DIP2020"/>
<dbReference type="KEGG" id="cdi:DIP2020"/>
<dbReference type="HOGENOM" id="CLU_016503_3_0_11"/>
<dbReference type="Proteomes" id="UP000002198">
    <property type="component" value="Chromosome"/>
</dbReference>
<dbReference type="GO" id="GO:0005737">
    <property type="term" value="C:cytoplasm"/>
    <property type="evidence" value="ECO:0007669"/>
    <property type="project" value="UniProtKB-SubCell"/>
</dbReference>
<dbReference type="GO" id="GO:0005524">
    <property type="term" value="F:ATP binding"/>
    <property type="evidence" value="ECO:0007669"/>
    <property type="project" value="UniProtKB-UniRule"/>
</dbReference>
<dbReference type="GO" id="GO:0140662">
    <property type="term" value="F:ATP-dependent protein folding chaperone"/>
    <property type="evidence" value="ECO:0007669"/>
    <property type="project" value="InterPro"/>
</dbReference>
<dbReference type="GO" id="GO:0016853">
    <property type="term" value="F:isomerase activity"/>
    <property type="evidence" value="ECO:0007669"/>
    <property type="project" value="UniProtKB-KW"/>
</dbReference>
<dbReference type="GO" id="GO:0051082">
    <property type="term" value="F:unfolded protein binding"/>
    <property type="evidence" value="ECO:0007669"/>
    <property type="project" value="UniProtKB-UniRule"/>
</dbReference>
<dbReference type="GO" id="GO:0042026">
    <property type="term" value="P:protein refolding"/>
    <property type="evidence" value="ECO:0007669"/>
    <property type="project" value="UniProtKB-UniRule"/>
</dbReference>
<dbReference type="CDD" id="cd03344">
    <property type="entry name" value="GroEL"/>
    <property type="match status" value="1"/>
</dbReference>
<dbReference type="FunFam" id="3.50.7.10:FF:000001">
    <property type="entry name" value="60 kDa chaperonin"/>
    <property type="match status" value="1"/>
</dbReference>
<dbReference type="Gene3D" id="3.50.7.10">
    <property type="entry name" value="GroEL"/>
    <property type="match status" value="1"/>
</dbReference>
<dbReference type="Gene3D" id="1.10.560.10">
    <property type="entry name" value="GroEL-like equatorial domain"/>
    <property type="match status" value="1"/>
</dbReference>
<dbReference type="Gene3D" id="3.30.260.10">
    <property type="entry name" value="TCP-1-like chaperonin intermediate domain"/>
    <property type="match status" value="1"/>
</dbReference>
<dbReference type="HAMAP" id="MF_00600">
    <property type="entry name" value="CH60"/>
    <property type="match status" value="1"/>
</dbReference>
<dbReference type="InterPro" id="IPR018370">
    <property type="entry name" value="Chaperonin_Cpn60_CS"/>
</dbReference>
<dbReference type="InterPro" id="IPR001844">
    <property type="entry name" value="Cpn60/GroEL"/>
</dbReference>
<dbReference type="InterPro" id="IPR002423">
    <property type="entry name" value="Cpn60/GroEL/TCP-1"/>
</dbReference>
<dbReference type="InterPro" id="IPR027409">
    <property type="entry name" value="GroEL-like_apical_dom_sf"/>
</dbReference>
<dbReference type="InterPro" id="IPR027413">
    <property type="entry name" value="GROEL-like_equatorial_sf"/>
</dbReference>
<dbReference type="InterPro" id="IPR027410">
    <property type="entry name" value="TCP-1-like_intermed_sf"/>
</dbReference>
<dbReference type="NCBIfam" id="TIGR02348">
    <property type="entry name" value="GroEL"/>
    <property type="match status" value="1"/>
</dbReference>
<dbReference type="NCBIfam" id="NF000592">
    <property type="entry name" value="PRK00013.1"/>
    <property type="match status" value="1"/>
</dbReference>
<dbReference type="NCBIfam" id="NF009487">
    <property type="entry name" value="PRK12849.1"/>
    <property type="match status" value="1"/>
</dbReference>
<dbReference type="NCBIfam" id="NF009488">
    <property type="entry name" value="PRK12850.1"/>
    <property type="match status" value="1"/>
</dbReference>
<dbReference type="NCBIfam" id="NF009489">
    <property type="entry name" value="PRK12851.1"/>
    <property type="match status" value="1"/>
</dbReference>
<dbReference type="PANTHER" id="PTHR45633">
    <property type="entry name" value="60 KDA HEAT SHOCK PROTEIN, MITOCHONDRIAL"/>
    <property type="match status" value="1"/>
</dbReference>
<dbReference type="Pfam" id="PF00118">
    <property type="entry name" value="Cpn60_TCP1"/>
    <property type="match status" value="1"/>
</dbReference>
<dbReference type="PRINTS" id="PR00298">
    <property type="entry name" value="CHAPERONIN60"/>
</dbReference>
<dbReference type="SUPFAM" id="SSF52029">
    <property type="entry name" value="GroEL apical domain-like"/>
    <property type="match status" value="1"/>
</dbReference>
<dbReference type="SUPFAM" id="SSF48592">
    <property type="entry name" value="GroEL equatorial domain-like"/>
    <property type="match status" value="1"/>
</dbReference>
<dbReference type="SUPFAM" id="SSF54849">
    <property type="entry name" value="GroEL-intermediate domain like"/>
    <property type="match status" value="1"/>
</dbReference>
<dbReference type="PROSITE" id="PS00296">
    <property type="entry name" value="CHAPERONINS_CPN60"/>
    <property type="match status" value="1"/>
</dbReference>
<feature type="chain" id="PRO_0000063348" description="Chaperonin GroEL 2">
    <location>
        <begin position="1"/>
        <end position="546"/>
    </location>
</feature>
<feature type="binding site" evidence="1">
    <location>
        <begin position="29"/>
        <end position="32"/>
    </location>
    <ligand>
        <name>ATP</name>
        <dbReference type="ChEBI" id="CHEBI:30616"/>
    </ligand>
</feature>
<feature type="binding site" evidence="1">
    <location>
        <begin position="86"/>
        <end position="90"/>
    </location>
    <ligand>
        <name>ATP</name>
        <dbReference type="ChEBI" id="CHEBI:30616"/>
    </ligand>
</feature>
<feature type="binding site" evidence="1">
    <location>
        <position position="418"/>
    </location>
    <ligand>
        <name>ATP</name>
        <dbReference type="ChEBI" id="CHEBI:30616"/>
    </ligand>
</feature>
<feature type="binding site" evidence="1">
    <location>
        <begin position="482"/>
        <end position="484"/>
    </location>
    <ligand>
        <name>ATP</name>
        <dbReference type="ChEBI" id="CHEBI:30616"/>
    </ligand>
</feature>
<feature type="binding site" evidence="1">
    <location>
        <position position="498"/>
    </location>
    <ligand>
        <name>ATP</name>
        <dbReference type="ChEBI" id="CHEBI:30616"/>
    </ligand>
</feature>
<name>CH602_CORDI</name>